<name>GLYA_STAMF</name>
<reference key="1">
    <citation type="journal article" date="2009" name="BMC Genomics">
        <title>The complete genome sequence of Staphylothermus marinus reveals differences in sulfur metabolism among heterotrophic Crenarchaeota.</title>
        <authorList>
            <person name="Anderson I.J."/>
            <person name="Dharmarajan L."/>
            <person name="Rodriguez J."/>
            <person name="Hooper S."/>
            <person name="Porat I."/>
            <person name="Ulrich L.E."/>
            <person name="Elkins J.G."/>
            <person name="Mavromatis K."/>
            <person name="Sun H."/>
            <person name="Land M."/>
            <person name="Lapidus A."/>
            <person name="Lucas S."/>
            <person name="Barry K."/>
            <person name="Huber H."/>
            <person name="Zhulin I.B."/>
            <person name="Whitman W.B."/>
            <person name="Mukhopadhyay B."/>
            <person name="Woese C."/>
            <person name="Bristow J."/>
            <person name="Kyrpides N."/>
        </authorList>
    </citation>
    <scope>NUCLEOTIDE SEQUENCE [LARGE SCALE GENOMIC DNA]</scope>
    <source>
        <strain>ATCC 43588 / DSM 3639 / JCM 9404 / F1</strain>
    </source>
</reference>
<reference key="2">
    <citation type="journal article" date="2009" name="Stand. Genomic Sci.">
        <title>Complete genome sequence of Staphylothermus marinus Stetter and Fiala 1986 type strain F1.</title>
        <authorList>
            <person name="Anderson I.J."/>
            <person name="Sun H."/>
            <person name="Lapidus A."/>
            <person name="Copeland A."/>
            <person name="Glavina Del Rio T."/>
            <person name="Tice H."/>
            <person name="Dalin E."/>
            <person name="Lucas S."/>
            <person name="Barry K."/>
            <person name="Land M."/>
            <person name="Richardson P."/>
            <person name="Huber H."/>
            <person name="Kyrpides N.C."/>
        </authorList>
    </citation>
    <scope>NUCLEOTIDE SEQUENCE [LARGE SCALE GENOMIC DNA]</scope>
    <source>
        <strain>ATCC 43588 / DSM 3639 / JCM 9404 / F1</strain>
    </source>
</reference>
<dbReference type="EC" id="2.1.2.-" evidence="1"/>
<dbReference type="EMBL" id="CP000575">
    <property type="protein sequence ID" value="ABN70206.1"/>
    <property type="molecule type" value="Genomic_DNA"/>
</dbReference>
<dbReference type="RefSeq" id="WP_011839397.1">
    <property type="nucleotide sequence ID" value="NC_009033.1"/>
</dbReference>
<dbReference type="SMR" id="A3DNJ6"/>
<dbReference type="STRING" id="399550.Smar_1110"/>
<dbReference type="GeneID" id="4908039"/>
<dbReference type="KEGG" id="smr:Smar_1110"/>
<dbReference type="eggNOG" id="arCOG00070">
    <property type="taxonomic scope" value="Archaea"/>
</dbReference>
<dbReference type="HOGENOM" id="CLU_022477_2_1_2"/>
<dbReference type="OrthoDB" id="5821at2157"/>
<dbReference type="UniPathway" id="UPA00288">
    <property type="reaction ID" value="UER01023"/>
</dbReference>
<dbReference type="Proteomes" id="UP000000254">
    <property type="component" value="Chromosome"/>
</dbReference>
<dbReference type="GO" id="GO:0005737">
    <property type="term" value="C:cytoplasm"/>
    <property type="evidence" value="ECO:0007669"/>
    <property type="project" value="UniProtKB-SubCell"/>
</dbReference>
<dbReference type="GO" id="GO:0004372">
    <property type="term" value="F:glycine hydroxymethyltransferase activity"/>
    <property type="evidence" value="ECO:0007669"/>
    <property type="project" value="UniProtKB-UniRule"/>
</dbReference>
<dbReference type="GO" id="GO:0030170">
    <property type="term" value="F:pyridoxal phosphate binding"/>
    <property type="evidence" value="ECO:0007669"/>
    <property type="project" value="UniProtKB-UniRule"/>
</dbReference>
<dbReference type="GO" id="GO:0019264">
    <property type="term" value="P:glycine biosynthetic process from serine"/>
    <property type="evidence" value="ECO:0007669"/>
    <property type="project" value="UniProtKB-UniRule"/>
</dbReference>
<dbReference type="GO" id="GO:0035999">
    <property type="term" value="P:tetrahydrofolate interconversion"/>
    <property type="evidence" value="ECO:0007669"/>
    <property type="project" value="InterPro"/>
</dbReference>
<dbReference type="CDD" id="cd00378">
    <property type="entry name" value="SHMT"/>
    <property type="match status" value="1"/>
</dbReference>
<dbReference type="FunFam" id="3.40.640.10:FF:000101">
    <property type="entry name" value="Serine hydroxymethyltransferase"/>
    <property type="match status" value="1"/>
</dbReference>
<dbReference type="FunFam" id="3.90.1150.10:FF:000114">
    <property type="entry name" value="Serine hydroxymethyltransferase"/>
    <property type="match status" value="1"/>
</dbReference>
<dbReference type="Gene3D" id="3.90.1150.10">
    <property type="entry name" value="Aspartate Aminotransferase, domain 1"/>
    <property type="match status" value="1"/>
</dbReference>
<dbReference type="Gene3D" id="3.40.640.10">
    <property type="entry name" value="Type I PLP-dependent aspartate aminotransferase-like (Major domain)"/>
    <property type="match status" value="1"/>
</dbReference>
<dbReference type="HAMAP" id="MF_00051">
    <property type="entry name" value="SHMT"/>
    <property type="match status" value="1"/>
</dbReference>
<dbReference type="InterPro" id="IPR015424">
    <property type="entry name" value="PyrdxlP-dep_Trfase"/>
</dbReference>
<dbReference type="InterPro" id="IPR015421">
    <property type="entry name" value="PyrdxlP-dep_Trfase_major"/>
</dbReference>
<dbReference type="InterPro" id="IPR015422">
    <property type="entry name" value="PyrdxlP-dep_Trfase_small"/>
</dbReference>
<dbReference type="InterPro" id="IPR001085">
    <property type="entry name" value="Ser_HO-MeTrfase"/>
</dbReference>
<dbReference type="InterPro" id="IPR049943">
    <property type="entry name" value="Ser_HO-MeTrfase-like"/>
</dbReference>
<dbReference type="InterPro" id="IPR019798">
    <property type="entry name" value="Ser_HO-MeTrfase_PLP_BS"/>
</dbReference>
<dbReference type="InterPro" id="IPR039429">
    <property type="entry name" value="SHMT-like_dom"/>
</dbReference>
<dbReference type="NCBIfam" id="NF000586">
    <property type="entry name" value="PRK00011.1"/>
    <property type="match status" value="1"/>
</dbReference>
<dbReference type="PANTHER" id="PTHR11680">
    <property type="entry name" value="SERINE HYDROXYMETHYLTRANSFERASE"/>
    <property type="match status" value="1"/>
</dbReference>
<dbReference type="PANTHER" id="PTHR11680:SF35">
    <property type="entry name" value="SERINE HYDROXYMETHYLTRANSFERASE 1"/>
    <property type="match status" value="1"/>
</dbReference>
<dbReference type="Pfam" id="PF00464">
    <property type="entry name" value="SHMT"/>
    <property type="match status" value="1"/>
</dbReference>
<dbReference type="PIRSF" id="PIRSF000412">
    <property type="entry name" value="SHMT"/>
    <property type="match status" value="1"/>
</dbReference>
<dbReference type="SUPFAM" id="SSF53383">
    <property type="entry name" value="PLP-dependent transferases"/>
    <property type="match status" value="1"/>
</dbReference>
<dbReference type="PROSITE" id="PS00096">
    <property type="entry name" value="SHMT"/>
    <property type="match status" value="1"/>
</dbReference>
<organism>
    <name type="scientific">Staphylothermus marinus (strain ATCC 43588 / DSM 3639 / JCM 9404 / F1)</name>
    <dbReference type="NCBI Taxonomy" id="399550"/>
    <lineage>
        <taxon>Archaea</taxon>
        <taxon>Thermoproteota</taxon>
        <taxon>Thermoprotei</taxon>
        <taxon>Desulfurococcales</taxon>
        <taxon>Desulfurococcaceae</taxon>
        <taxon>Staphylothermus</taxon>
    </lineage>
</organism>
<proteinExistence type="inferred from homology"/>
<feature type="chain" id="PRO_0000369976" description="Serine hydroxymethyltransferase">
    <location>
        <begin position="1"/>
        <end position="439"/>
    </location>
</feature>
<feature type="binding site" evidence="1">
    <location>
        <begin position="126"/>
        <end position="128"/>
    </location>
    <ligand>
        <name>(6S)-5,6,7,8-tetrahydrofolate</name>
        <dbReference type="ChEBI" id="CHEBI:57453"/>
    </ligand>
</feature>
<feature type="site" description="Plays an important role in substrate specificity" evidence="1">
    <location>
        <position position="231"/>
    </location>
</feature>
<feature type="modified residue" description="N6-(pyridoxal phosphate)lysine" evidence="1">
    <location>
        <position position="232"/>
    </location>
</feature>
<accession>A3DNJ6</accession>
<protein>
    <recommendedName>
        <fullName evidence="1">Serine hydroxymethyltransferase</fullName>
        <shortName evidence="1">SHMT</shortName>
        <shortName evidence="1">Serine methylase</shortName>
        <ecNumber evidence="1">2.1.2.-</ecNumber>
    </recommendedName>
</protein>
<comment type="function">
    <text evidence="1">Catalyzes the reversible interconversion of serine and glycine with a modified folate serving as the one-carbon carrier. Also exhibits a pteridine-independent aldolase activity toward beta-hydroxyamino acids, producing glycine and aldehydes, via a retro-aldol mechanism.</text>
</comment>
<comment type="cofactor">
    <cofactor evidence="1">
        <name>pyridoxal 5'-phosphate</name>
        <dbReference type="ChEBI" id="CHEBI:597326"/>
    </cofactor>
</comment>
<comment type="pathway">
    <text evidence="1">Amino-acid biosynthesis; glycine biosynthesis; glycine from L-serine: step 1/1.</text>
</comment>
<comment type="subunit">
    <text evidence="1">Homodimer.</text>
</comment>
<comment type="subcellular location">
    <subcellularLocation>
        <location evidence="1">Cytoplasm</location>
    </subcellularLocation>
</comment>
<comment type="similarity">
    <text evidence="1">Belongs to the SHMT family.</text>
</comment>
<keyword id="KW-0028">Amino-acid biosynthesis</keyword>
<keyword id="KW-0963">Cytoplasm</keyword>
<keyword id="KW-0554">One-carbon metabolism</keyword>
<keyword id="KW-0663">Pyridoxal phosphate</keyword>
<keyword id="KW-1185">Reference proteome</keyword>
<keyword id="KW-0808">Transferase</keyword>
<gene>
    <name evidence="1" type="primary">glyA</name>
    <name type="ordered locus">Smar_1110</name>
</gene>
<evidence type="ECO:0000255" key="1">
    <source>
        <dbReference type="HAMAP-Rule" id="MF_00051"/>
    </source>
</evidence>
<sequence>MVIDITKKYPELKEIYELTVNHTIWRKKECINLIASENVMSPLAMLLYLNDMMHRYAEGKPFKRFYQGLKFVDELEVKAQRIIGELLETDYVELRPISGTIANATVFKAFAEHGDKAVVVPVQAGAHVSHTRYGTLGGLGIEQVEMPFNIEEWNIDVDGAKKVIEKVKPKIVILGGSLYIFPHPVKEIAEAAHSVGAKLMYDVAHVLGLITGKVWENPLKQGADILTSSTHKTFPGPQGGLIATVTKDDYKKVSKIVFPVFVSNHHLHRLAALAVTGLEMKYFGRQYAEQIVKNAKAFAEALAENGFKVIGENKGYTESHQVIIDVREHGGGAKNAKLLEEANIIVNKNMLPWDKPEDIKNPSGIRLGVQEVTRWGMKEEDMKTIAEFMRLVVIDKRDPKEIRNKVIEFRKNFLEIHYGFKISGEEETKLLKIMLHGEV</sequence>